<feature type="chain" id="PRO_1000187429" description="5'-methylthioadenosine/S-adenosylhomocysteine nucleosidase">
    <location>
        <begin position="1"/>
        <end position="232"/>
    </location>
</feature>
<feature type="active site" description="Proton acceptor" evidence="1">
    <location>
        <position position="12"/>
    </location>
</feature>
<feature type="active site" description="Proton donor" evidence="1">
    <location>
        <position position="197"/>
    </location>
</feature>
<feature type="binding site" evidence="1">
    <location>
        <position position="78"/>
    </location>
    <ligand>
        <name>substrate</name>
    </ligand>
</feature>
<feature type="binding site" evidence="1">
    <location>
        <position position="152"/>
    </location>
    <ligand>
        <name>substrate</name>
    </ligand>
</feature>
<feature type="binding site" evidence="1">
    <location>
        <begin position="173"/>
        <end position="174"/>
    </location>
    <ligand>
        <name>substrate</name>
    </ligand>
</feature>
<gene>
    <name evidence="1" type="primary">mtnN</name>
    <name type="ordered locus">SPC_0223</name>
</gene>
<reference key="1">
    <citation type="journal article" date="2009" name="PLoS ONE">
        <title>Salmonella paratyphi C: genetic divergence from Salmonella choleraesuis and pathogenic convergence with Salmonella typhi.</title>
        <authorList>
            <person name="Liu W.-Q."/>
            <person name="Feng Y."/>
            <person name="Wang Y."/>
            <person name="Zou Q.-H."/>
            <person name="Chen F."/>
            <person name="Guo J.-T."/>
            <person name="Peng Y.-H."/>
            <person name="Jin Y."/>
            <person name="Li Y.-G."/>
            <person name="Hu S.-N."/>
            <person name="Johnston R.N."/>
            <person name="Liu G.-R."/>
            <person name="Liu S.-L."/>
        </authorList>
    </citation>
    <scope>NUCLEOTIDE SEQUENCE [LARGE SCALE GENOMIC DNA]</scope>
    <source>
        <strain>RKS4594</strain>
    </source>
</reference>
<protein>
    <recommendedName>
        <fullName evidence="1">5'-methylthioadenosine/S-adenosylhomocysteine nucleosidase</fullName>
        <shortName evidence="1">MTA/SAH nucleosidase</shortName>
        <shortName evidence="1">MTAN</shortName>
        <ecNumber evidence="1">3.2.2.9</ecNumber>
    </recommendedName>
    <alternativeName>
        <fullName evidence="1">5'-deoxyadenosine nucleosidase</fullName>
        <shortName evidence="1">DOA nucleosidase</shortName>
        <shortName evidence="1">dAdo nucleosidase</shortName>
    </alternativeName>
    <alternativeName>
        <fullName evidence="1">5'-methylthioadenosine nucleosidase</fullName>
        <shortName evidence="1">MTA nucleosidase</shortName>
    </alternativeName>
    <alternativeName>
        <fullName evidence="1">S-adenosylhomocysteine nucleosidase</fullName>
        <shortName evidence="1">AdoHcy nucleosidase</shortName>
        <shortName evidence="1">SAH nucleosidase</shortName>
        <shortName evidence="1">SRH nucleosidase</shortName>
    </alternativeName>
</protein>
<proteinExistence type="inferred from homology"/>
<accession>C0Q5S0</accession>
<name>MTNN_SALPC</name>
<sequence length="232" mass="24476">MKIGIIGAMEEEVTLLRDKIDNRQTITLGGCEIYTGQLNGTEVALLKSGIGKVAAALGATLLLEHCKPDVIINTGSAGGLASTLKVGDIVVSDETRYHDADVTAFGYEYGQLPGCPAGFKADDKLIAAAESCIRELNLNAVRGLIVSGDAFINGSVGLAKIRHNFPDAVAVEMEATAIAHVCHNFNVPFVVVRAISDVADQQSHLSFDEFLAVAAKQSTLMVETLVQKLAHG</sequence>
<dbReference type="EC" id="3.2.2.9" evidence="1"/>
<dbReference type="EMBL" id="CP000857">
    <property type="protein sequence ID" value="ACN44412.1"/>
    <property type="molecule type" value="Genomic_DNA"/>
</dbReference>
<dbReference type="RefSeq" id="WP_000689826.1">
    <property type="nucleotide sequence ID" value="NC_012125.1"/>
</dbReference>
<dbReference type="SMR" id="C0Q5S0"/>
<dbReference type="KEGG" id="sei:SPC_0223"/>
<dbReference type="HOGENOM" id="CLU_031248_2_2_6"/>
<dbReference type="UniPathway" id="UPA00904">
    <property type="reaction ID" value="UER00871"/>
</dbReference>
<dbReference type="Proteomes" id="UP000001599">
    <property type="component" value="Chromosome"/>
</dbReference>
<dbReference type="GO" id="GO:0005829">
    <property type="term" value="C:cytosol"/>
    <property type="evidence" value="ECO:0007669"/>
    <property type="project" value="TreeGrafter"/>
</dbReference>
<dbReference type="GO" id="GO:0008782">
    <property type="term" value="F:adenosylhomocysteine nucleosidase activity"/>
    <property type="evidence" value="ECO:0007669"/>
    <property type="project" value="UniProtKB-UniRule"/>
</dbReference>
<dbReference type="GO" id="GO:0008930">
    <property type="term" value="F:methylthioadenosine nucleosidase activity"/>
    <property type="evidence" value="ECO:0007669"/>
    <property type="project" value="UniProtKB-UniRule"/>
</dbReference>
<dbReference type="GO" id="GO:0019509">
    <property type="term" value="P:L-methionine salvage from methylthioadenosine"/>
    <property type="evidence" value="ECO:0007669"/>
    <property type="project" value="UniProtKB-UniRule"/>
</dbReference>
<dbReference type="GO" id="GO:0019284">
    <property type="term" value="P:L-methionine salvage from S-adenosylmethionine"/>
    <property type="evidence" value="ECO:0007669"/>
    <property type="project" value="TreeGrafter"/>
</dbReference>
<dbReference type="GO" id="GO:0046124">
    <property type="term" value="P:purine deoxyribonucleoside catabolic process"/>
    <property type="evidence" value="ECO:0007669"/>
    <property type="project" value="UniProtKB-UniRule"/>
</dbReference>
<dbReference type="CDD" id="cd09008">
    <property type="entry name" value="MTAN"/>
    <property type="match status" value="1"/>
</dbReference>
<dbReference type="FunFam" id="3.40.50.1580:FF:000001">
    <property type="entry name" value="MTA/SAH nucleosidase family protein"/>
    <property type="match status" value="1"/>
</dbReference>
<dbReference type="Gene3D" id="3.40.50.1580">
    <property type="entry name" value="Nucleoside phosphorylase domain"/>
    <property type="match status" value="1"/>
</dbReference>
<dbReference type="HAMAP" id="MF_01684">
    <property type="entry name" value="Salvage_MtnN"/>
    <property type="match status" value="1"/>
</dbReference>
<dbReference type="InterPro" id="IPR010049">
    <property type="entry name" value="MTA_SAH_Nsdase"/>
</dbReference>
<dbReference type="InterPro" id="IPR000845">
    <property type="entry name" value="Nucleoside_phosphorylase_d"/>
</dbReference>
<dbReference type="InterPro" id="IPR035994">
    <property type="entry name" value="Nucleoside_phosphorylase_sf"/>
</dbReference>
<dbReference type="NCBIfam" id="TIGR01704">
    <property type="entry name" value="MTA_SAH-Nsdase"/>
    <property type="match status" value="1"/>
</dbReference>
<dbReference type="NCBIfam" id="NF004079">
    <property type="entry name" value="PRK05584.1"/>
    <property type="match status" value="1"/>
</dbReference>
<dbReference type="PANTHER" id="PTHR46832">
    <property type="entry name" value="5'-METHYLTHIOADENOSINE/S-ADENOSYLHOMOCYSTEINE NUCLEOSIDASE"/>
    <property type="match status" value="1"/>
</dbReference>
<dbReference type="PANTHER" id="PTHR46832:SF1">
    <property type="entry name" value="5'-METHYLTHIOADENOSINE_S-ADENOSYLHOMOCYSTEINE NUCLEOSIDASE"/>
    <property type="match status" value="1"/>
</dbReference>
<dbReference type="Pfam" id="PF01048">
    <property type="entry name" value="PNP_UDP_1"/>
    <property type="match status" value="1"/>
</dbReference>
<dbReference type="SUPFAM" id="SSF53167">
    <property type="entry name" value="Purine and uridine phosphorylases"/>
    <property type="match status" value="1"/>
</dbReference>
<organism>
    <name type="scientific">Salmonella paratyphi C (strain RKS4594)</name>
    <dbReference type="NCBI Taxonomy" id="476213"/>
    <lineage>
        <taxon>Bacteria</taxon>
        <taxon>Pseudomonadati</taxon>
        <taxon>Pseudomonadota</taxon>
        <taxon>Gammaproteobacteria</taxon>
        <taxon>Enterobacterales</taxon>
        <taxon>Enterobacteriaceae</taxon>
        <taxon>Salmonella</taxon>
    </lineage>
</organism>
<comment type="function">
    <text evidence="1">Catalyzes the irreversible cleavage of the glycosidic bond in both 5'-methylthioadenosine (MTA) and S-adenosylhomocysteine (SAH/AdoHcy) to adenine and the corresponding thioribose, 5'-methylthioribose and S-ribosylhomocysteine, respectively. Also cleaves 5'-deoxyadenosine, a toxic by-product of radical S-adenosylmethionine (SAM) enzymes, into 5-deoxyribose and adenine. Thus, is required for in vivo function of the radical SAM enzymes biotin synthase and lipoic acid synthase, that are inhibited by 5'-deoxyadenosine accumulation.</text>
</comment>
<comment type="catalytic activity">
    <reaction evidence="1">
        <text>S-adenosyl-L-homocysteine + H2O = S-(5-deoxy-D-ribos-5-yl)-L-homocysteine + adenine</text>
        <dbReference type="Rhea" id="RHEA:17805"/>
        <dbReference type="ChEBI" id="CHEBI:15377"/>
        <dbReference type="ChEBI" id="CHEBI:16708"/>
        <dbReference type="ChEBI" id="CHEBI:57856"/>
        <dbReference type="ChEBI" id="CHEBI:58195"/>
        <dbReference type="EC" id="3.2.2.9"/>
    </reaction>
</comment>
<comment type="catalytic activity">
    <reaction evidence="1">
        <text>S-methyl-5'-thioadenosine + H2O = 5-(methylsulfanyl)-D-ribose + adenine</text>
        <dbReference type="Rhea" id="RHEA:13617"/>
        <dbReference type="ChEBI" id="CHEBI:15377"/>
        <dbReference type="ChEBI" id="CHEBI:16708"/>
        <dbReference type="ChEBI" id="CHEBI:17509"/>
        <dbReference type="ChEBI" id="CHEBI:78440"/>
        <dbReference type="EC" id="3.2.2.9"/>
    </reaction>
</comment>
<comment type="catalytic activity">
    <reaction evidence="1">
        <text>5'-deoxyadenosine + H2O = 5-deoxy-D-ribose + adenine</text>
        <dbReference type="Rhea" id="RHEA:29859"/>
        <dbReference type="ChEBI" id="CHEBI:15377"/>
        <dbReference type="ChEBI" id="CHEBI:16708"/>
        <dbReference type="ChEBI" id="CHEBI:17319"/>
        <dbReference type="ChEBI" id="CHEBI:149540"/>
        <dbReference type="EC" id="3.2.2.9"/>
    </reaction>
    <physiologicalReaction direction="left-to-right" evidence="1">
        <dbReference type="Rhea" id="RHEA:29860"/>
    </physiologicalReaction>
</comment>
<comment type="pathway">
    <text evidence="1">Amino-acid biosynthesis; L-methionine biosynthesis via salvage pathway; S-methyl-5-thio-alpha-D-ribose 1-phosphate from S-methyl-5'-thioadenosine (hydrolase route): step 1/2.</text>
</comment>
<comment type="subunit">
    <text evidence="1">Homodimer.</text>
</comment>
<comment type="similarity">
    <text evidence="1">Belongs to the PNP/UDP phosphorylase family. MtnN subfamily.</text>
</comment>
<keyword id="KW-0028">Amino-acid biosynthesis</keyword>
<keyword id="KW-0378">Hydrolase</keyword>
<keyword id="KW-0486">Methionine biosynthesis</keyword>
<evidence type="ECO:0000255" key="1">
    <source>
        <dbReference type="HAMAP-Rule" id="MF_01684"/>
    </source>
</evidence>